<name>GDL48_ARATH</name>
<accession>Q67ZI9</accession>
<accession>Q67ZI0</accession>
<accession>Q9SJG0</accession>
<sequence length="350" mass="39200">MATHYLSPSILCIILTTLVSIAGAKIPAIIVFGDSSVDSGNNNFISTMARANFEPYGRDFPGGRATGRFCNGRLSSDFTSEAYGLKPTVPAYLDPSYNISDFATGVCFASAGTGYDNSTADVLGVIPLWKEVEYFKEYQSNLSAYLGHRRAAKIIRESLYIVSIGTNDFLENYYTLPDRRSQFSISQYQDFLVEIAEVFLKDIYRLGARKMSFTGISPMGCLPLERVTNLDDPFSCARSYNDLAVDFNGRLRRLVTKLNRELTGIKIYFANPYDIMWDIVTKPNLYGLEISSSACCGTGLFEMGFLCGQDNPLTCSDANKFVFWDAFHPTERTNQIVSDHFFKHLKNLFH</sequence>
<reference key="1">
    <citation type="journal article" date="1999" name="Nature">
        <title>Sequence and analysis of chromosome 2 of the plant Arabidopsis thaliana.</title>
        <authorList>
            <person name="Lin X."/>
            <person name="Kaul S."/>
            <person name="Rounsley S.D."/>
            <person name="Shea T.P."/>
            <person name="Benito M.-I."/>
            <person name="Town C.D."/>
            <person name="Fujii C.Y."/>
            <person name="Mason T.M."/>
            <person name="Bowman C.L."/>
            <person name="Barnstead M.E."/>
            <person name="Feldblyum T.V."/>
            <person name="Buell C.R."/>
            <person name="Ketchum K.A."/>
            <person name="Lee J.J."/>
            <person name="Ronning C.M."/>
            <person name="Koo H.L."/>
            <person name="Moffat K.S."/>
            <person name="Cronin L.A."/>
            <person name="Shen M."/>
            <person name="Pai G."/>
            <person name="Van Aken S."/>
            <person name="Umayam L."/>
            <person name="Tallon L.J."/>
            <person name="Gill J.E."/>
            <person name="Adams M.D."/>
            <person name="Carrera A.J."/>
            <person name="Creasy T.H."/>
            <person name="Goodman H.M."/>
            <person name="Somerville C.R."/>
            <person name="Copenhaver G.P."/>
            <person name="Preuss D."/>
            <person name="Nierman W.C."/>
            <person name="White O."/>
            <person name="Eisen J.A."/>
            <person name="Salzberg S.L."/>
            <person name="Fraser C.M."/>
            <person name="Venter J.C."/>
        </authorList>
    </citation>
    <scope>NUCLEOTIDE SEQUENCE [LARGE SCALE GENOMIC DNA]</scope>
    <source>
        <strain>cv. Columbia</strain>
    </source>
</reference>
<reference key="2">
    <citation type="journal article" date="2017" name="Plant J.">
        <title>Araport11: a complete reannotation of the Arabidopsis thaliana reference genome.</title>
        <authorList>
            <person name="Cheng C.Y."/>
            <person name="Krishnakumar V."/>
            <person name="Chan A.P."/>
            <person name="Thibaud-Nissen F."/>
            <person name="Schobel S."/>
            <person name="Town C.D."/>
        </authorList>
    </citation>
    <scope>GENOME REANNOTATION</scope>
    <source>
        <strain>cv. Columbia</strain>
    </source>
</reference>
<reference key="3">
    <citation type="submission" date="2004-09" db="EMBL/GenBank/DDBJ databases">
        <title>Large-scale analysis of RIKEN Arabidopsis full-length (RAFL) cDNAs.</title>
        <authorList>
            <person name="Totoki Y."/>
            <person name="Seki M."/>
            <person name="Ishida J."/>
            <person name="Nakajima M."/>
            <person name="Enju A."/>
            <person name="Kamiya A."/>
            <person name="Narusaka M."/>
            <person name="Shin-i T."/>
            <person name="Nakagawa M."/>
            <person name="Sakamoto N."/>
            <person name="Oishi K."/>
            <person name="Kohara Y."/>
            <person name="Kobayashi M."/>
            <person name="Toyoda A."/>
            <person name="Sakaki Y."/>
            <person name="Sakurai T."/>
            <person name="Iida K."/>
            <person name="Akiyama K."/>
            <person name="Satou M."/>
            <person name="Toyoda T."/>
            <person name="Konagaya A."/>
            <person name="Carninci P."/>
            <person name="Kawai J."/>
            <person name="Hayashizaki Y."/>
            <person name="Shinozaki K."/>
        </authorList>
    </citation>
    <scope>NUCLEOTIDE SEQUENCE [LARGE SCALE MRNA]</scope>
    <source>
        <strain>cv. Columbia</strain>
    </source>
</reference>
<reference key="4">
    <citation type="submission" date="2004-02" db="EMBL/GenBank/DDBJ databases">
        <title>Arabidopsis ORF clones.</title>
        <authorList>
            <person name="Shinn P."/>
            <person name="Chen H."/>
            <person name="Cheuk R.F."/>
            <person name="Kim C.J."/>
            <person name="Ecker J.R."/>
        </authorList>
    </citation>
    <scope>NUCLEOTIDE SEQUENCE [LARGE SCALE MRNA] OF 48-350</scope>
    <source>
        <strain>cv. Columbia</strain>
    </source>
</reference>
<reference key="5">
    <citation type="journal article" date="2004" name="Prog. Lipid Res.">
        <title>GDSL family of serine esterases/lipases.</title>
        <authorList>
            <person name="Akoh C.C."/>
            <person name="Lee G.-C."/>
            <person name="Liaw Y.-C."/>
            <person name="Huang T.-H."/>
            <person name="Shaw J.-F."/>
        </authorList>
    </citation>
    <scope>REVIEW</scope>
</reference>
<reference key="6">
    <citation type="journal article" date="2008" name="Pak. J. Biol. Sci.">
        <title>Sequence analysis of GDSL lipase gene family in Arabidopsis thaliana.</title>
        <authorList>
            <person name="Ling H."/>
        </authorList>
    </citation>
    <scope>GENE FAMILY</scope>
</reference>
<feature type="signal peptide" evidence="2">
    <location>
        <begin position="1"/>
        <end position="24"/>
    </location>
</feature>
<feature type="chain" id="PRO_0000367389" description="GDSL esterase/lipase At2g42990">
    <location>
        <begin position="25"/>
        <end position="350"/>
    </location>
</feature>
<feature type="active site" description="Nucleophile" evidence="1">
    <location>
        <position position="35"/>
    </location>
</feature>
<feature type="active site" evidence="1">
    <location>
        <position position="325"/>
    </location>
</feature>
<feature type="active site" evidence="1">
    <location>
        <position position="328"/>
    </location>
</feature>
<feature type="glycosylation site" description="N-linked (GlcNAc...) asparagine" evidence="2">
    <location>
        <position position="98"/>
    </location>
</feature>
<feature type="glycosylation site" description="N-linked (GlcNAc...) asparagine" evidence="2">
    <location>
        <position position="117"/>
    </location>
</feature>
<feature type="glycosylation site" description="N-linked (GlcNAc...) asparagine" evidence="2">
    <location>
        <position position="141"/>
    </location>
</feature>
<proteinExistence type="evidence at transcript level"/>
<keyword id="KW-0325">Glycoprotein</keyword>
<keyword id="KW-0378">Hydrolase</keyword>
<keyword id="KW-0442">Lipid degradation</keyword>
<keyword id="KW-0443">Lipid metabolism</keyword>
<keyword id="KW-1185">Reference proteome</keyword>
<keyword id="KW-0964">Secreted</keyword>
<keyword id="KW-0732">Signal</keyword>
<comment type="subcellular location">
    <subcellularLocation>
        <location evidence="3">Secreted</location>
    </subcellularLocation>
</comment>
<comment type="similarity">
    <text evidence="3">Belongs to the 'GDSL' lipolytic enzyme family.</text>
</comment>
<comment type="sequence caution" evidence="3">
    <conflict type="erroneous gene model prediction">
        <sequence resource="EMBL-CDS" id="AAD21711"/>
    </conflict>
</comment>
<comment type="sequence caution" evidence="3">
    <conflict type="erroneous gene model prediction">
        <sequence resource="EMBL-CDS" id="AAM15290"/>
    </conflict>
</comment>
<protein>
    <recommendedName>
        <fullName>GDSL esterase/lipase At2g42990</fullName>
        <ecNumber>3.1.1.-</ecNumber>
    </recommendedName>
    <alternativeName>
        <fullName>Extracellular lipase At2g42990</fullName>
    </alternativeName>
</protein>
<gene>
    <name type="ordered locus">At2g42990</name>
    <name type="ORF">F23E6.2</name>
</gene>
<evidence type="ECO:0000250" key="1"/>
<evidence type="ECO:0000255" key="2"/>
<evidence type="ECO:0000305" key="3"/>
<organism>
    <name type="scientific">Arabidopsis thaliana</name>
    <name type="common">Mouse-ear cress</name>
    <dbReference type="NCBI Taxonomy" id="3702"/>
    <lineage>
        <taxon>Eukaryota</taxon>
        <taxon>Viridiplantae</taxon>
        <taxon>Streptophyta</taxon>
        <taxon>Embryophyta</taxon>
        <taxon>Tracheophyta</taxon>
        <taxon>Spermatophyta</taxon>
        <taxon>Magnoliopsida</taxon>
        <taxon>eudicotyledons</taxon>
        <taxon>Gunneridae</taxon>
        <taxon>Pentapetalae</taxon>
        <taxon>rosids</taxon>
        <taxon>malvids</taxon>
        <taxon>Brassicales</taxon>
        <taxon>Brassicaceae</taxon>
        <taxon>Camelineae</taxon>
        <taxon>Arabidopsis</taxon>
    </lineage>
</organism>
<dbReference type="EC" id="3.1.1.-"/>
<dbReference type="EMBL" id="AC006580">
    <property type="protein sequence ID" value="AAM15290.1"/>
    <property type="status" value="ALT_SEQ"/>
    <property type="molecule type" value="Genomic_DNA"/>
</dbReference>
<dbReference type="EMBL" id="AC006931">
    <property type="protein sequence ID" value="AAD21711.1"/>
    <property type="status" value="ALT_SEQ"/>
    <property type="molecule type" value="Genomic_DNA"/>
</dbReference>
<dbReference type="EMBL" id="CP002685">
    <property type="protein sequence ID" value="AEC10195.1"/>
    <property type="molecule type" value="Genomic_DNA"/>
</dbReference>
<dbReference type="EMBL" id="AK175715">
    <property type="protein sequence ID" value="BAD43478.1"/>
    <property type="molecule type" value="mRNA"/>
</dbReference>
<dbReference type="EMBL" id="AK176128">
    <property type="protein sequence ID" value="BAD43891.1"/>
    <property type="molecule type" value="mRNA"/>
</dbReference>
<dbReference type="EMBL" id="AK176137">
    <property type="protein sequence ID" value="BAD43900.1"/>
    <property type="molecule type" value="mRNA"/>
</dbReference>
<dbReference type="EMBL" id="BT011672">
    <property type="protein sequence ID" value="AAS47678.1"/>
    <property type="molecule type" value="mRNA"/>
</dbReference>
<dbReference type="PIR" id="F84860">
    <property type="entry name" value="F84860"/>
</dbReference>
<dbReference type="RefSeq" id="NP_181827.2">
    <property type="nucleotide sequence ID" value="NM_129860.4"/>
</dbReference>
<dbReference type="SMR" id="Q67ZI9"/>
<dbReference type="FunCoup" id="Q67ZI9">
    <property type="interactions" value="99"/>
</dbReference>
<dbReference type="STRING" id="3702.Q67ZI9"/>
<dbReference type="GlyGen" id="Q67ZI9">
    <property type="glycosylation" value="3 sites"/>
</dbReference>
<dbReference type="PaxDb" id="3702-AT2G42990.1"/>
<dbReference type="ProteomicsDB" id="224758"/>
<dbReference type="EnsemblPlants" id="AT2G42990.1">
    <property type="protein sequence ID" value="AT2G42990.1"/>
    <property type="gene ID" value="AT2G42990"/>
</dbReference>
<dbReference type="GeneID" id="818901"/>
<dbReference type="Gramene" id="AT2G42990.1">
    <property type="protein sequence ID" value="AT2G42990.1"/>
    <property type="gene ID" value="AT2G42990"/>
</dbReference>
<dbReference type="KEGG" id="ath:AT2G42990"/>
<dbReference type="Araport" id="AT2G42990"/>
<dbReference type="TAIR" id="AT2G42990"/>
<dbReference type="eggNOG" id="ENOG502QXBZ">
    <property type="taxonomic scope" value="Eukaryota"/>
</dbReference>
<dbReference type="HOGENOM" id="CLU_015101_0_1_1"/>
<dbReference type="InParanoid" id="Q67ZI9"/>
<dbReference type="OMA" id="MCNDDAP"/>
<dbReference type="OrthoDB" id="1600564at2759"/>
<dbReference type="PhylomeDB" id="Q67ZI9"/>
<dbReference type="BioCyc" id="ARA:AT2G42990-MONOMER"/>
<dbReference type="PRO" id="PR:Q67ZI9"/>
<dbReference type="Proteomes" id="UP000006548">
    <property type="component" value="Chromosome 2"/>
</dbReference>
<dbReference type="ExpressionAtlas" id="Q67ZI9">
    <property type="expression patterns" value="baseline and differential"/>
</dbReference>
<dbReference type="GO" id="GO:0005576">
    <property type="term" value="C:extracellular region"/>
    <property type="evidence" value="ECO:0007669"/>
    <property type="project" value="UniProtKB-SubCell"/>
</dbReference>
<dbReference type="GO" id="GO:0016788">
    <property type="term" value="F:hydrolase activity, acting on ester bonds"/>
    <property type="evidence" value="ECO:0007669"/>
    <property type="project" value="InterPro"/>
</dbReference>
<dbReference type="GO" id="GO:0016042">
    <property type="term" value="P:lipid catabolic process"/>
    <property type="evidence" value="ECO:0007669"/>
    <property type="project" value="UniProtKB-KW"/>
</dbReference>
<dbReference type="CDD" id="cd01837">
    <property type="entry name" value="SGNH_plant_lipase_like"/>
    <property type="match status" value="1"/>
</dbReference>
<dbReference type="FunFam" id="3.40.50.1110:FF:000003">
    <property type="entry name" value="GDSL esterase/lipase APG"/>
    <property type="match status" value="1"/>
</dbReference>
<dbReference type="Gene3D" id="3.40.50.1110">
    <property type="entry name" value="SGNH hydrolase"/>
    <property type="match status" value="1"/>
</dbReference>
<dbReference type="InterPro" id="IPR001087">
    <property type="entry name" value="GDSL"/>
</dbReference>
<dbReference type="InterPro" id="IPR050592">
    <property type="entry name" value="GDSL_lipolytic_enzyme"/>
</dbReference>
<dbReference type="InterPro" id="IPR036514">
    <property type="entry name" value="SGNH_hydro_sf"/>
</dbReference>
<dbReference type="InterPro" id="IPR035669">
    <property type="entry name" value="SGNH_plant_lipase-like"/>
</dbReference>
<dbReference type="PANTHER" id="PTHR45642">
    <property type="entry name" value="GDSL ESTERASE/LIPASE EXL3"/>
    <property type="match status" value="1"/>
</dbReference>
<dbReference type="PANTHER" id="PTHR45642:SF51">
    <property type="entry name" value="GDSL-LIKE LIPASE_ACYLHYDROLASE"/>
    <property type="match status" value="1"/>
</dbReference>
<dbReference type="Pfam" id="PF00657">
    <property type="entry name" value="Lipase_GDSL"/>
    <property type="match status" value="1"/>
</dbReference>
<dbReference type="SUPFAM" id="SSF52266">
    <property type="entry name" value="SGNH hydrolase"/>
    <property type="match status" value="1"/>
</dbReference>